<organism>
    <name type="scientific">Gorilla gorilla gorilla</name>
    <name type="common">Western lowland gorilla</name>
    <dbReference type="NCBI Taxonomy" id="9595"/>
    <lineage>
        <taxon>Eukaryota</taxon>
        <taxon>Metazoa</taxon>
        <taxon>Chordata</taxon>
        <taxon>Craniata</taxon>
        <taxon>Vertebrata</taxon>
        <taxon>Euteleostomi</taxon>
        <taxon>Mammalia</taxon>
        <taxon>Eutheria</taxon>
        <taxon>Euarchontoglires</taxon>
        <taxon>Primates</taxon>
        <taxon>Haplorrhini</taxon>
        <taxon>Catarrhini</taxon>
        <taxon>Hominidae</taxon>
        <taxon>Gorilla</taxon>
    </lineage>
</organism>
<protein>
    <recommendedName>
        <fullName>Taste receptor type 2 member 13</fullName>
        <shortName>T2R13</shortName>
    </recommendedName>
</protein>
<evidence type="ECO:0000250" key="1"/>
<evidence type="ECO:0000255" key="2"/>
<evidence type="ECO:0000305" key="3"/>
<keyword id="KW-0297">G-protein coupled receptor</keyword>
<keyword id="KW-0325">Glycoprotein</keyword>
<keyword id="KW-0472">Membrane</keyword>
<keyword id="KW-0675">Receptor</keyword>
<keyword id="KW-1185">Reference proteome</keyword>
<keyword id="KW-0716">Sensory transduction</keyword>
<keyword id="KW-0919">Taste</keyword>
<keyword id="KW-0807">Transducer</keyword>
<keyword id="KW-0812">Transmembrane</keyword>
<keyword id="KW-1133">Transmembrane helix</keyword>
<reference key="1">
    <citation type="journal article" date="2005" name="Mol. Biol. Evol.">
        <title>Evolution of bitter taste receptors in humans and apes.</title>
        <authorList>
            <person name="Fischer A."/>
            <person name="Gilad Y."/>
            <person name="Man O."/>
            <person name="Paeaebo S."/>
        </authorList>
    </citation>
    <scope>NUCLEOTIDE SEQUENCE [GENOMIC DNA]</scope>
</reference>
<proteinExistence type="inferred from homology"/>
<gene>
    <name type="primary">TAS2R13</name>
</gene>
<accession>Q645Z5</accession>
<name>T2R13_GORGO</name>
<dbReference type="EMBL" id="AY724914">
    <property type="protein sequence ID" value="AAU21124.1"/>
    <property type="molecule type" value="Genomic_DNA"/>
</dbReference>
<dbReference type="FunCoup" id="Q645Z5">
    <property type="interactions" value="180"/>
</dbReference>
<dbReference type="STRING" id="9593.ENSGGOP00000006376"/>
<dbReference type="GlyCosmos" id="Q645Z5">
    <property type="glycosylation" value="2 sites, No reported glycans"/>
</dbReference>
<dbReference type="eggNOG" id="ENOG502TE6X">
    <property type="taxonomic scope" value="Eukaryota"/>
</dbReference>
<dbReference type="InParanoid" id="Q645Z5"/>
<dbReference type="Proteomes" id="UP000001519">
    <property type="component" value="Unplaced"/>
</dbReference>
<dbReference type="GO" id="GO:0016020">
    <property type="term" value="C:membrane"/>
    <property type="evidence" value="ECO:0000318"/>
    <property type="project" value="GO_Central"/>
</dbReference>
<dbReference type="GO" id="GO:0005886">
    <property type="term" value="C:plasma membrane"/>
    <property type="evidence" value="ECO:0007669"/>
    <property type="project" value="UniProtKB-ARBA"/>
</dbReference>
<dbReference type="GO" id="GO:0033038">
    <property type="term" value="F:bitter taste receptor activity"/>
    <property type="evidence" value="ECO:0000318"/>
    <property type="project" value="GO_Central"/>
</dbReference>
<dbReference type="GO" id="GO:0004930">
    <property type="term" value="F:G protein-coupled receptor activity"/>
    <property type="evidence" value="ECO:0007669"/>
    <property type="project" value="UniProtKB-KW"/>
</dbReference>
<dbReference type="GO" id="GO:0001580">
    <property type="term" value="P:detection of chemical stimulus involved in sensory perception of bitter taste"/>
    <property type="evidence" value="ECO:0000318"/>
    <property type="project" value="GO_Central"/>
</dbReference>
<dbReference type="CDD" id="cd15026">
    <property type="entry name" value="7tm_TAS2R13"/>
    <property type="match status" value="1"/>
</dbReference>
<dbReference type="FunFam" id="1.20.1070.10:FF:000042">
    <property type="entry name" value="Taste receptor type 2 member 7"/>
    <property type="match status" value="1"/>
</dbReference>
<dbReference type="Gene3D" id="1.20.1070.10">
    <property type="entry name" value="Rhodopsin 7-helix transmembrane proteins"/>
    <property type="match status" value="1"/>
</dbReference>
<dbReference type="InterPro" id="IPR007960">
    <property type="entry name" value="TAS2R"/>
</dbReference>
<dbReference type="PANTHER" id="PTHR11394">
    <property type="entry name" value="TASTE RECEPTOR TYPE 2"/>
    <property type="match status" value="1"/>
</dbReference>
<dbReference type="PANTHER" id="PTHR11394:SF28">
    <property type="entry name" value="TASTE RECEPTOR TYPE 2 MEMBER 13"/>
    <property type="match status" value="1"/>
</dbReference>
<dbReference type="Pfam" id="PF05296">
    <property type="entry name" value="TAS2R"/>
    <property type="match status" value="1"/>
</dbReference>
<dbReference type="SUPFAM" id="SSF81321">
    <property type="entry name" value="Family A G protein-coupled receptor-like"/>
    <property type="match status" value="1"/>
</dbReference>
<comment type="function">
    <text evidence="1">Receptor that may play a role in the perception of bitterness and is gustducin-linked. May play a role in sensing the chemical composition of the gastrointestinal content. The activity of this receptor may stimulate alpha gustducin, mediate PLC-beta-2 activation and lead to the gating of TRPM5 (By similarity).</text>
</comment>
<comment type="subcellular location">
    <subcellularLocation>
        <location>Membrane</location>
        <topology>Multi-pass membrane protein</topology>
    </subcellularLocation>
</comment>
<comment type="miscellaneous">
    <text>Most taste cells may be activated by a limited number of bitter compounds; individual taste cells can discriminate among bitter stimuli.</text>
</comment>
<comment type="similarity">
    <text evidence="3">Belongs to the G-protein coupled receptor T2R family.</text>
</comment>
<feature type="chain" id="PRO_0000082246" description="Taste receptor type 2 member 13">
    <location>
        <begin position="1"/>
        <end position="303"/>
    </location>
</feature>
<feature type="topological domain" description="Extracellular" evidence="2">
    <location>
        <begin position="1"/>
        <end position="7"/>
    </location>
</feature>
<feature type="transmembrane region" description="Helical; Name=1" evidence="2">
    <location>
        <begin position="8"/>
        <end position="28"/>
    </location>
</feature>
<feature type="topological domain" description="Cytoplasmic" evidence="2">
    <location>
        <begin position="29"/>
        <end position="55"/>
    </location>
</feature>
<feature type="transmembrane region" description="Helical; Name=2" evidence="2">
    <location>
        <begin position="56"/>
        <end position="76"/>
    </location>
</feature>
<feature type="topological domain" description="Extracellular" evidence="2">
    <location>
        <begin position="77"/>
        <end position="85"/>
    </location>
</feature>
<feature type="transmembrane region" description="Helical; Name=3" evidence="2">
    <location>
        <begin position="86"/>
        <end position="106"/>
    </location>
</feature>
<feature type="topological domain" description="Cytoplasmic" evidence="2">
    <location>
        <begin position="107"/>
        <end position="128"/>
    </location>
</feature>
<feature type="transmembrane region" description="Helical; Name=4" evidence="2">
    <location>
        <begin position="129"/>
        <end position="149"/>
    </location>
</feature>
<feature type="topological domain" description="Extracellular" evidence="2">
    <location>
        <begin position="150"/>
        <end position="184"/>
    </location>
</feature>
<feature type="transmembrane region" description="Helical; Name=5" evidence="2">
    <location>
        <begin position="185"/>
        <end position="205"/>
    </location>
</feature>
<feature type="topological domain" description="Cytoplasmic" evidence="2">
    <location>
        <begin position="206"/>
        <end position="232"/>
    </location>
</feature>
<feature type="transmembrane region" description="Helical; Name=6" evidence="2">
    <location>
        <begin position="233"/>
        <end position="253"/>
    </location>
</feature>
<feature type="topological domain" description="Extracellular" evidence="2">
    <location>
        <begin position="254"/>
        <end position="261"/>
    </location>
</feature>
<feature type="transmembrane region" description="Helical; Name=7" evidence="2">
    <location>
        <begin position="262"/>
        <end position="282"/>
    </location>
</feature>
<feature type="topological domain" description="Cytoplasmic" evidence="2">
    <location>
        <begin position="283"/>
        <end position="303"/>
    </location>
</feature>
<feature type="glycosylation site" description="N-linked (GlcNAc...) asparagine" evidence="2">
    <location>
        <position position="162"/>
    </location>
</feature>
<feature type="glycosylation site" description="N-linked (GlcNAc...) asparagine" evidence="2">
    <location>
        <position position="166"/>
    </location>
</feature>
<sequence length="303" mass="35111">MKSALPSIFTLVIIAEFIIGNLSNGFIVLINCIDWVSKRELSSVDKLLIILAISRIGLIWEILVSWFLALHYLAIFVSGTGLRIMIFSWIVSNHFNLWLATILSIFYLLKIASFSSPAFLYLKWRVNKVILLILLGTLVFLFLNLIQINMHIKDWLDRYERNTTWNFSMSDFETFSVSVKFTMTMFSLTPFTVAFISFLLLIFSLQKHLQKMQLNYKGHRDPKTKVHTNALKIVISFLLFYASFFLCVLXSWISELYQNTVIYMLCETIGVFYPSSHSFLLILGNAKLRQAFLLVAAKVWAKR</sequence>